<reference key="1">
    <citation type="journal article" date="1988" name="Bioorg. Khim.">
        <title>Amino acid sequence of neurotoxin II from the sea anemone Radianthus macrodactylus.</title>
        <authorList>
            <person name="Zykova T.A."/>
            <person name="Kozlovskaya E.P."/>
            <person name="Elyakov G.V."/>
        </authorList>
    </citation>
    <scope>PROTEIN SEQUENCE</scope>
    <scope>SUBCELLULAR LOCATION</scope>
    <source>
        <tissue>Nematoblast</tissue>
    </source>
</reference>
<reference key="2">
    <citation type="journal article" date="1991" name="Toxicon">
        <title>Structure and structure-function relationships of sea anemone proteins that interact with the sodium channel.</title>
        <authorList>
            <person name="Norton R.S."/>
        </authorList>
    </citation>
    <scope>SEQUENCE REVISION TO 39-40</scope>
</reference>
<reference key="3">
    <citation type="journal article" date="2012" name="Toxicon">
        <title>Development of a rational nomenclature for naming peptide and protein toxins from sea anemones.</title>
        <authorList>
            <person name="Oliveira J.S."/>
            <person name="Fuentes-Silva D."/>
            <person name="King G.F."/>
        </authorList>
    </citation>
    <scope>NOMENCLATURE</scope>
</reference>
<protein>
    <recommendedName>
        <fullName evidence="4">Delta-stichotoxin-Hcr1b</fullName>
        <shortName evidence="4">Delta-SHTX-Hcr1b</shortName>
    </recommendedName>
    <alternativeName>
        <fullName evidence="5">Neurotoxin II</fullName>
    </alternativeName>
    <alternativeName>
        <fullName>RTX-II</fullName>
    </alternativeName>
    <alternativeName>
        <fullName>Rm2</fullName>
    </alternativeName>
</protein>
<dbReference type="PIR" id="JN0386">
    <property type="entry name" value="JN0386"/>
</dbReference>
<dbReference type="SMR" id="P30783"/>
<dbReference type="GO" id="GO:0005576">
    <property type="term" value="C:extracellular region"/>
    <property type="evidence" value="ECO:0007669"/>
    <property type="project" value="UniProtKB-SubCell"/>
</dbReference>
<dbReference type="GO" id="GO:0042151">
    <property type="term" value="C:nematocyst"/>
    <property type="evidence" value="ECO:0007669"/>
    <property type="project" value="UniProtKB-SubCell"/>
</dbReference>
<dbReference type="GO" id="GO:0017080">
    <property type="term" value="F:sodium channel regulator activity"/>
    <property type="evidence" value="ECO:0007669"/>
    <property type="project" value="UniProtKB-KW"/>
</dbReference>
<dbReference type="GO" id="GO:0090729">
    <property type="term" value="F:toxin activity"/>
    <property type="evidence" value="ECO:0007669"/>
    <property type="project" value="UniProtKB-KW"/>
</dbReference>
<dbReference type="GO" id="GO:0009966">
    <property type="term" value="P:regulation of signal transduction"/>
    <property type="evidence" value="ECO:0007669"/>
    <property type="project" value="InterPro"/>
</dbReference>
<dbReference type="Gene3D" id="2.20.20.10">
    <property type="entry name" value="Anthopleurin-A"/>
    <property type="match status" value="1"/>
</dbReference>
<dbReference type="InterPro" id="IPR000693">
    <property type="entry name" value="Anenome_toxin"/>
</dbReference>
<dbReference type="InterPro" id="IPR023355">
    <property type="entry name" value="Myo_ane_neurotoxin_sf"/>
</dbReference>
<dbReference type="Pfam" id="PF00706">
    <property type="entry name" value="Toxin_4"/>
    <property type="match status" value="1"/>
</dbReference>
<dbReference type="PIRSF" id="PIRSF001905">
    <property type="entry name" value="Anenome_toxin"/>
    <property type="match status" value="1"/>
</dbReference>
<dbReference type="SUPFAM" id="SSF57392">
    <property type="entry name" value="Defensin-like"/>
    <property type="match status" value="1"/>
</dbReference>
<organism>
    <name type="scientific">Radianthus crispa</name>
    <name type="common">Leathery sea anemone</name>
    <name type="synonym">Heteractis crispa</name>
    <dbReference type="NCBI Taxonomy" id="3122430"/>
    <lineage>
        <taxon>Eukaryota</taxon>
        <taxon>Metazoa</taxon>
        <taxon>Cnidaria</taxon>
        <taxon>Anthozoa</taxon>
        <taxon>Hexacorallia</taxon>
        <taxon>Actiniaria</taxon>
        <taxon>Stichodactylidae</taxon>
        <taxon>Radianthus</taxon>
    </lineage>
</organism>
<comment type="function">
    <text evidence="2">Binds to site 3 of voltage-gated sodium channels and inhibits the inactivation process.</text>
</comment>
<comment type="subcellular location">
    <subcellularLocation>
        <location evidence="3">Secreted</location>
    </subcellularLocation>
    <subcellularLocation>
        <location>Nematocyst</location>
    </subcellularLocation>
</comment>
<comment type="miscellaneous">
    <text evidence="6">A synonymy between H.magnifica and R.crispa is controversial.</text>
</comment>
<comment type="similarity">
    <text evidence="6">Belongs to the sea anemone sodium channel inhibitory toxin family. Type II subfamily.</text>
</comment>
<name>NA22_RADCR</name>
<proteinExistence type="evidence at protein level"/>
<sequence>GTCKCDDDGPDVRTATFTGSTEFANCNESWEKCLAVYTPVASCCRKKK</sequence>
<evidence type="ECO:0000250" key="1">
    <source>
        <dbReference type="UniProtKB" id="P19651"/>
    </source>
</evidence>
<evidence type="ECO:0000250" key="2">
    <source>
        <dbReference type="UniProtKB" id="P30832"/>
    </source>
</evidence>
<evidence type="ECO:0000269" key="3">
    <source>
    </source>
</evidence>
<evidence type="ECO:0000303" key="4">
    <source>
    </source>
</evidence>
<evidence type="ECO:0000303" key="5">
    <source>
    </source>
</evidence>
<evidence type="ECO:0000305" key="6"/>
<accession>P30783</accession>
<feature type="chain" id="PRO_0000221523" description="Delta-stichotoxin-Hcr1b" evidence="3">
    <location>
        <begin position="1"/>
        <end position="48"/>
    </location>
</feature>
<feature type="disulfide bond" evidence="1">
    <location>
        <begin position="3"/>
        <end position="43"/>
    </location>
</feature>
<feature type="disulfide bond" evidence="1">
    <location>
        <begin position="5"/>
        <end position="33"/>
    </location>
</feature>
<feature type="disulfide bond" evidence="1">
    <location>
        <begin position="26"/>
        <end position="44"/>
    </location>
</feature>
<keyword id="KW-0903">Direct protein sequencing</keyword>
<keyword id="KW-1015">Disulfide bond</keyword>
<keyword id="KW-0872">Ion channel impairing toxin</keyword>
<keyword id="KW-0166">Nematocyst</keyword>
<keyword id="KW-0528">Neurotoxin</keyword>
<keyword id="KW-0964">Secreted</keyword>
<keyword id="KW-0800">Toxin</keyword>
<keyword id="KW-0738">Voltage-gated sodium channel impairing toxin</keyword>